<reference key="1">
    <citation type="journal article" date="2013" name="Plant Physiol.">
        <title>The nodulation factor hydrolase of Medicago truncatula: characterization of an enzyme specifically cleaving rhizobial nodulation signals.</title>
        <authorList>
            <person name="Tian Y."/>
            <person name="Liu W."/>
            <person name="Cai J."/>
            <person name="Zhang L.Y."/>
            <person name="Wong K.B."/>
            <person name="Feddermann N."/>
            <person name="Boller T."/>
            <person name="Xie Z.P."/>
            <person name="Staehelin C."/>
        </authorList>
    </citation>
    <scope>NUCLEOTIDE SEQUENCE [GENOMIC DNA]</scope>
</reference>
<reference key="2">
    <citation type="journal article" date="2011" name="Nature">
        <title>The Medicago genome provides insight into the evolution of rhizobial symbioses.</title>
        <authorList>
            <person name="Young N.D."/>
            <person name="Debelle F."/>
            <person name="Oldroyd G.E.D."/>
            <person name="Geurts R."/>
            <person name="Cannon S.B."/>
            <person name="Udvardi M.K."/>
            <person name="Benedito V.A."/>
            <person name="Mayer K.F.X."/>
            <person name="Gouzy J."/>
            <person name="Schoof H."/>
            <person name="Van de Peer Y."/>
            <person name="Proost S."/>
            <person name="Cook D.R."/>
            <person name="Meyers B.C."/>
            <person name="Spannagl M."/>
            <person name="Cheung F."/>
            <person name="De Mita S."/>
            <person name="Krishnakumar V."/>
            <person name="Gundlach H."/>
            <person name="Zhou S."/>
            <person name="Mudge J."/>
            <person name="Bharti A.K."/>
            <person name="Murray J.D."/>
            <person name="Naoumkina M.A."/>
            <person name="Rosen B."/>
            <person name="Silverstein K.A.T."/>
            <person name="Tang H."/>
            <person name="Rombauts S."/>
            <person name="Zhao P.X."/>
            <person name="Zhou P."/>
            <person name="Barbe V."/>
            <person name="Bardou P."/>
            <person name="Bechner M."/>
            <person name="Bellec A."/>
            <person name="Berger A."/>
            <person name="Berges H."/>
            <person name="Bidwell S."/>
            <person name="Bisseling T."/>
            <person name="Choisne N."/>
            <person name="Couloux A."/>
            <person name="Denny R."/>
            <person name="Deshpande S."/>
            <person name="Dai X."/>
            <person name="Doyle J.J."/>
            <person name="Dudez A.-M."/>
            <person name="Farmer A.D."/>
            <person name="Fouteau S."/>
            <person name="Franken C."/>
            <person name="Gibelin C."/>
            <person name="Gish J."/>
            <person name="Goldstein S."/>
            <person name="Gonzalez A.J."/>
            <person name="Green P.J."/>
            <person name="Hallab A."/>
            <person name="Hartog M."/>
            <person name="Hua A."/>
            <person name="Humphray S.J."/>
            <person name="Jeong D.-H."/>
            <person name="Jing Y."/>
            <person name="Jocker A."/>
            <person name="Kenton S.M."/>
            <person name="Kim D.-J."/>
            <person name="Klee K."/>
            <person name="Lai H."/>
            <person name="Lang C."/>
            <person name="Lin S."/>
            <person name="Macmil S.L."/>
            <person name="Magdelenat G."/>
            <person name="Matthews L."/>
            <person name="McCorrison J."/>
            <person name="Monaghan E.L."/>
            <person name="Mun J.-H."/>
            <person name="Najar F.Z."/>
            <person name="Nicholson C."/>
            <person name="Noirot C."/>
            <person name="O'Bleness M."/>
            <person name="Paule C.R."/>
            <person name="Poulain J."/>
            <person name="Prion F."/>
            <person name="Qin B."/>
            <person name="Qu C."/>
            <person name="Retzel E.F."/>
            <person name="Riddle C."/>
            <person name="Sallet E."/>
            <person name="Samain S."/>
            <person name="Samson N."/>
            <person name="Sanders I."/>
            <person name="Saurat O."/>
            <person name="Scarpelli C."/>
            <person name="Schiex T."/>
            <person name="Segurens B."/>
            <person name="Severin A.J."/>
            <person name="Sherrier D.J."/>
            <person name="Shi R."/>
            <person name="Sims S."/>
            <person name="Singer S.R."/>
            <person name="Sinharoy S."/>
            <person name="Sterck L."/>
            <person name="Viollet A."/>
            <person name="Wang B.-B."/>
            <person name="Wang K."/>
            <person name="Wang M."/>
            <person name="Wang X."/>
            <person name="Warfsmann J."/>
            <person name="Weissenbach J."/>
            <person name="White D.D."/>
            <person name="White J.D."/>
            <person name="Wiley G.B."/>
            <person name="Wincker P."/>
            <person name="Xing Y."/>
            <person name="Yang L."/>
            <person name="Yao Z."/>
            <person name="Ying F."/>
            <person name="Zhai J."/>
            <person name="Zhou L."/>
            <person name="Zuber A."/>
            <person name="Denarie J."/>
            <person name="Dixon R.A."/>
            <person name="May G.D."/>
            <person name="Schwartz D.C."/>
            <person name="Rogers J."/>
            <person name="Quetier F."/>
            <person name="Town C.D."/>
            <person name="Roe B.A."/>
        </authorList>
    </citation>
    <scope>NUCLEOTIDE SEQUENCE [LARGE SCALE GENOMIC DNA]</scope>
    <source>
        <strain>cv. Jemalong A17</strain>
    </source>
</reference>
<reference key="3">
    <citation type="journal article" date="2014" name="BMC Genomics">
        <title>An improved genome release (version Mt4.0) for the model legume Medicago truncatula.</title>
        <authorList>
            <person name="Tang H."/>
            <person name="Krishnakumar V."/>
            <person name="Bidwell S."/>
            <person name="Rosen B."/>
            <person name="Chan A."/>
            <person name="Zhou S."/>
            <person name="Gentzbittel L."/>
            <person name="Childs K.L."/>
            <person name="Yandell M."/>
            <person name="Gundlach H."/>
            <person name="Mayer K.F."/>
            <person name="Schwartz D.C."/>
            <person name="Town C.D."/>
        </authorList>
    </citation>
    <scope>GENOME REANNOTATION</scope>
    <source>
        <strain>cv. Jemalong A17</strain>
    </source>
</reference>
<reference key="4">
    <citation type="journal article" date="2018" name="Nat. Plants">
        <title>Whole-genome landscape of Medicago truncatula symbiotic genes.</title>
        <authorList>
            <person name="Pecrix Y."/>
            <person name="Staton S.E."/>
            <person name="Sallet E."/>
            <person name="Lelandais-Briere C."/>
            <person name="Moreau S."/>
            <person name="Carrere S."/>
            <person name="Blein T."/>
            <person name="Jardinaud M.F."/>
            <person name="Latrasse D."/>
            <person name="Zouine M."/>
            <person name="Zahm M."/>
            <person name="Kreplak J."/>
            <person name="Mayjonade B."/>
            <person name="Satge C."/>
            <person name="Perez M."/>
            <person name="Cauet S."/>
            <person name="Marande W."/>
            <person name="Chantry-Darmon C."/>
            <person name="Lopez-Roques C."/>
            <person name="Bouchez O."/>
            <person name="Berard A."/>
            <person name="Debelle F."/>
            <person name="Munos S."/>
            <person name="Bendahmane A."/>
            <person name="Berges H."/>
            <person name="Niebel A."/>
            <person name="Buitink J."/>
            <person name="Frugier F."/>
            <person name="Benhamed M."/>
            <person name="Crespi M."/>
            <person name="Gouzy J."/>
            <person name="Gamas P."/>
        </authorList>
    </citation>
    <scope>NUCLEOTIDE SEQUENCE [LARGE SCALE GENOMIC DNA]</scope>
    <source>
        <strain>cv. Jemalong A17</strain>
    </source>
</reference>
<reference key="5">
    <citation type="journal article" date="2000" name="Mol. Plant Microbe Interact.">
        <title>Differential expression of eight chitinase genes in Medicago truncatula roots during mycorrhiza formation, nodulation, and pathogen infection.</title>
        <authorList>
            <person name="Salzer P."/>
            <person name="Bonanomi A."/>
            <person name="Beyer K."/>
            <person name="Vogeli-Lange R."/>
            <person name="Aeschbacher R.A."/>
            <person name="Lange J."/>
            <person name="Wiemken A."/>
            <person name="Kim D."/>
            <person name="Cook D.R."/>
            <person name="Boller T."/>
        </authorList>
    </citation>
    <scope>NUCLEOTIDE SEQUENCE [GENOMIC DNA] OF 276-335</scope>
</reference>
<reference key="6">
    <citation type="journal article" date="2004" name="Planta">
        <title>Sinorhizobium meliloti-induced chitinase gene expression in Medicago truncatula ecotype R108-1: a comparison between symbiosis-specific class V and defence-related class IV chitinases.</title>
        <authorList>
            <person name="Salzer P."/>
            <person name="Feddermann N."/>
            <person name="Wiemken A."/>
            <person name="Boller T."/>
            <person name="Staehelin C."/>
        </authorList>
    </citation>
    <scope>INDUCTION</scope>
</reference>
<reference key="7">
    <citation type="journal article" date="2016" name="Open Biol.">
        <title>A single amino acid substitution in a chitinase of the legume Medicago truncatula is sufficient to gain Nod-factor hydrolase activity.</title>
        <authorList>
            <person name="Zhang L.Y."/>
            <person name="Cai J."/>
            <person name="Li R.J."/>
            <person name="Liu W."/>
            <person name="Wagner C."/>
            <person name="Wong K.B."/>
            <person name="Xie Z.P."/>
            <person name="Staehelin C."/>
        </authorList>
    </citation>
    <scope>FUNCTION</scope>
    <scope>MUTAGENESIS OF 229-GLY--SER-232; PRO-295 AND 295-PRO--GLY-302</scope>
</reference>
<reference key="8">
    <citation type="journal article" date="2018" name="Plant Cell">
        <title>Role of the Nod factor hydrolase MtNFH1 in regulating nod factor levels during rhizobial infection and in mature nodules of Medicago truncatula.</title>
        <authorList>
            <person name="Cai J."/>
            <person name="Zhang L.Y."/>
            <person name="Liu W."/>
            <person name="Tian Y."/>
            <person name="Xiong J.S."/>
            <person name="Wang Y.H."/>
            <person name="Li R.J."/>
            <person name="Li H.M."/>
            <person name="Wen J."/>
            <person name="Mysore K.S."/>
            <person name="Boller T."/>
            <person name="Xie Z.P."/>
            <person name="Staehelin C."/>
        </authorList>
    </citation>
    <scope>FUNCTION</scope>
    <scope>INDUCTION</scope>
</reference>
<comment type="function">
    <text evidence="5 6">Symbiotic enzyme that hydrolytically inactivates Nod factors (NFs) with a C16:2 acyl chain produced by the microsymbiont Sinorhizobium meliloti (PubMed:27383628, PubMed:29367305). NFs are lipo-chitooligosaccharide signaling molecules produced by nitrogen-fixing rhizobia to initiate nodulation (symbiosis) on the roots of legumes (PubMed:27383628, PubMed:29367305). Controls NF hydrolysis at the stage of root hair infection (PubMed:29367305). Involved in the regulation of growth and branching of mature nodules (PubMed:29367305). Modulates NF levels and signaling to complete transition of infected nodules to functional nitrogen-fixing organs (PubMed:29367305). Lacks chitinase activity in vitro toward glycol chitin, carboxymethyl-chitin, colloidal chitin, and the chitin oligosaccharides (N-acetylglucosamine) (GlcNAc)6 and (GlcNAc)5 (PubMed:27383628).</text>
</comment>
<comment type="induction">
    <text evidence="4 6">Induced in roots by Nod factors and infection of the microsymbiont Sinorhizobium meliloti.</text>
</comment>
<comment type="similarity">
    <text evidence="9">Belongs to the glycosyl hydrolase 18 family. Chitinase class V subfamily.</text>
</comment>
<gene>
    <name evidence="8" type="primary">NFH1</name>
    <name evidence="10" type="synonym">CHIT5</name>
    <name evidence="11" type="ordered locus">MTR_4g116990</name>
</gene>
<keyword id="KW-0325">Glycoprotein</keyword>
<keyword id="KW-0326">Glycosidase</keyword>
<keyword id="KW-0378">Hydrolase</keyword>
<keyword id="KW-0536">Nodulation</keyword>
<keyword id="KW-1185">Reference proteome</keyword>
<keyword id="KW-0732">Signal</keyword>
<accession>U5N4E3</accession>
<accession>A0A072US44</accession>
<accession>Q84N00</accession>
<accession>Q9M6Q0</accession>
<sequence length="385" mass="42193">MANFLKLKQFLTLVLILLALAAKSSKSTPSPSSTTRVKGIYWIENPLFPPSSIDTSLFTHIFYAFVSPNKFTYKLEEEEEDSTTVATSLTTFTNTFKTKTPPIPTLLSIGGATSNSTLFAFIASDPTARATFINSTIQVARTFGFDGIDFDWEFPTTTKEMNDLGELLFQWRRAISDETASTSRPPLLLTAAVYFAVNFFLSGERRMYPVDSINKNLDWVNVMSYDLRGSGSNVTGAPSGMFDSKSNVSVVSGLFSWIRGGVAPEKIVMGMPLYGKSWKLQDPNVHGIGAPNVGPGPGVDGGMAYFQVVDFNKQMGAKVVYDKETGSVYSYSGSTWIGYDDPFTVSVKVGFAQALKLGGYFFWAAGYDTSDWKVSTASKAWRPES</sequence>
<feature type="signal peptide" evidence="1">
    <location>
        <begin position="1"/>
        <end position="21"/>
    </location>
</feature>
<feature type="chain" id="PRO_5004662805" description="Nod factor hydrolase protein 1">
    <location>
        <begin position="22"/>
        <end position="385"/>
    </location>
</feature>
<feature type="domain" description="GH18" evidence="3">
    <location>
        <begin position="36"/>
        <end position="385"/>
    </location>
</feature>
<feature type="active site" description="Proton donor" evidence="3">
    <location>
        <position position="153"/>
    </location>
</feature>
<feature type="glycosylation site" description="N-linked (GlcNAc...) asparagine" evidence="2">
    <location>
        <position position="115"/>
    </location>
</feature>
<feature type="glycosylation site" description="N-linked (GlcNAc...) asparagine" evidence="2">
    <location>
        <position position="134"/>
    </location>
</feature>
<feature type="glycosylation site" description="N-linked (GlcNAc...) asparagine" evidence="2">
    <location>
        <position position="233"/>
    </location>
</feature>
<feature type="glycosylation site" description="N-linked (GlcNAc...) asparagine" evidence="2">
    <location>
        <position position="247"/>
    </location>
</feature>
<feature type="mutagenesis site" description="Abolishes Nod factor hydrolase activity." evidence="5">
    <location>
        <begin position="229"/>
        <end position="232"/>
    </location>
</feature>
<feature type="mutagenesis site" description="Abolishes Nod factor hydrolase activity." evidence="5">
    <location>
        <begin position="295"/>
        <end position="302"/>
    </location>
</feature>
<feature type="mutagenesis site" description="Abolishes Nod factor hydrolase activity." evidence="5">
    <original>P</original>
    <variation>S</variation>
    <location>
        <position position="295"/>
    </location>
</feature>
<feature type="sequence conflict" description="In Ref. 1; AGX84980/CAD56465." evidence="9" ref="1">
    <original>KSTP</original>
    <variation>TSTT</variation>
    <location>
        <begin position="26"/>
        <end position="29"/>
    </location>
</feature>
<feature type="sequence conflict" description="In Ref. 1; CAD56465." evidence="9" ref="1">
    <original>IE</original>
    <variation>DR</variation>
    <location>
        <begin position="43"/>
        <end position="44"/>
    </location>
</feature>
<feature type="sequence conflict" description="In Ref. 1; AGX84980/CAD56465." evidence="9" ref="1">
    <original>S</original>
    <variation>A</variation>
    <location>
        <position position="51"/>
    </location>
</feature>
<feature type="sequence conflict" description="In Ref. 1; AGX84980/CAD56465." evidence="9" ref="1">
    <location>
        <position position="76"/>
    </location>
</feature>
<feature type="sequence conflict" description="In Ref. 1; CAD56465." evidence="9" ref="1">
    <original>I</original>
    <variation>T</variation>
    <location>
        <position position="133"/>
    </location>
</feature>
<feature type="sequence conflict" description="In Ref. 1; AGX84980/CAD56465." evidence="9" ref="1">
    <original>T</original>
    <variation>A</variation>
    <location>
        <position position="179"/>
    </location>
</feature>
<feature type="sequence conflict" description="In Ref. 1; AGX84980." evidence="9" ref="1">
    <original>L</original>
    <variation>R</variation>
    <location>
        <position position="227"/>
    </location>
</feature>
<feature type="sequence conflict" description="In Ref. 1; CAD56465." evidence="9" ref="1">
    <original>S</original>
    <variation>G</variation>
    <location>
        <position position="252"/>
    </location>
</feature>
<feature type="sequence conflict" description="In Ref. 1; AGX84980." ref="1">
    <original>ASKAWRPE</original>
    <variation>GKINTLS</variation>
    <location>
        <begin position="377"/>
        <end position="384"/>
    </location>
</feature>
<feature type="sequence conflict" description="In Ref. 1; CAD56465." evidence="9" ref="1">
    <original>ASKAWRPE</original>
    <variation>QGKINTL</variation>
    <location>
        <begin position="377"/>
        <end position="384"/>
    </location>
</feature>
<dbReference type="EMBL" id="AJ515476">
    <property type="protein sequence ID" value="CAD56465.1"/>
    <property type="molecule type" value="Genomic_DNA"/>
</dbReference>
<dbReference type="EMBL" id="KC833515">
    <property type="protein sequence ID" value="AGX84980.1"/>
    <property type="molecule type" value="Genomic_DNA"/>
</dbReference>
<dbReference type="EMBL" id="CM001220">
    <property type="protein sequence ID" value="KEH32176.1"/>
    <property type="molecule type" value="Genomic_DNA"/>
</dbReference>
<dbReference type="EMBL" id="PSQE01000004">
    <property type="protein sequence ID" value="RHN64103.1"/>
    <property type="molecule type" value="Genomic_DNA"/>
</dbReference>
<dbReference type="EMBL" id="AF167329">
    <property type="protein sequence ID" value="AAF67831.1"/>
    <property type="molecule type" value="Genomic_DNA"/>
</dbReference>
<dbReference type="SMR" id="U5N4E3"/>
<dbReference type="STRING" id="3880.U5N4E3"/>
<dbReference type="CAZy" id="GH18">
    <property type="family name" value="Glycoside Hydrolase Family 18"/>
</dbReference>
<dbReference type="GlyCosmos" id="U5N4E3">
    <property type="glycosylation" value="4 sites, No reported glycans"/>
</dbReference>
<dbReference type="GeneID" id="25493983"/>
<dbReference type="KEGG" id="mtr:25493983"/>
<dbReference type="HOGENOM" id="CLU_002833_3_2_1"/>
<dbReference type="OrthoDB" id="76388at2759"/>
<dbReference type="Proteomes" id="UP000002051">
    <property type="component" value="Chromosome 4"/>
</dbReference>
<dbReference type="Proteomes" id="UP000265566">
    <property type="component" value="Chromosome 4"/>
</dbReference>
<dbReference type="ExpressionAtlas" id="U5N4E3">
    <property type="expression patterns" value="differential"/>
</dbReference>
<dbReference type="GO" id="GO:0005576">
    <property type="term" value="C:extracellular region"/>
    <property type="evidence" value="ECO:0000318"/>
    <property type="project" value="GO_Central"/>
</dbReference>
<dbReference type="GO" id="GO:0008061">
    <property type="term" value="F:chitin binding"/>
    <property type="evidence" value="ECO:0007669"/>
    <property type="project" value="InterPro"/>
</dbReference>
<dbReference type="GO" id="GO:0004568">
    <property type="term" value="F:chitinase activity"/>
    <property type="evidence" value="ECO:0000318"/>
    <property type="project" value="GO_Central"/>
</dbReference>
<dbReference type="GO" id="GO:0016787">
    <property type="term" value="F:hydrolase activity"/>
    <property type="evidence" value="ECO:0000314"/>
    <property type="project" value="UniProtKB"/>
</dbReference>
<dbReference type="GO" id="GO:0005975">
    <property type="term" value="P:carbohydrate metabolic process"/>
    <property type="evidence" value="ECO:0007669"/>
    <property type="project" value="InterPro"/>
</dbReference>
<dbReference type="GO" id="GO:0006032">
    <property type="term" value="P:chitin catabolic process"/>
    <property type="evidence" value="ECO:0000318"/>
    <property type="project" value="GO_Central"/>
</dbReference>
<dbReference type="GO" id="GO:0009877">
    <property type="term" value="P:nodulation"/>
    <property type="evidence" value="ECO:0000315"/>
    <property type="project" value="UniProtKB"/>
</dbReference>
<dbReference type="CDD" id="cd02879">
    <property type="entry name" value="GH18_plant_chitinase_class_V"/>
    <property type="match status" value="1"/>
</dbReference>
<dbReference type="FunFam" id="3.10.50.10:FF:000003">
    <property type="entry name" value="Class V chitinase CHIT5b"/>
    <property type="match status" value="1"/>
</dbReference>
<dbReference type="Gene3D" id="3.10.50.10">
    <property type="match status" value="1"/>
</dbReference>
<dbReference type="Gene3D" id="3.20.20.80">
    <property type="entry name" value="Glycosidases"/>
    <property type="match status" value="1"/>
</dbReference>
<dbReference type="InterPro" id="IPR011583">
    <property type="entry name" value="Chitinase_II/V-like_cat"/>
</dbReference>
<dbReference type="InterPro" id="IPR029070">
    <property type="entry name" value="Chitinase_insertion_sf"/>
</dbReference>
<dbReference type="InterPro" id="IPR001223">
    <property type="entry name" value="Glyco_hydro18_cat"/>
</dbReference>
<dbReference type="InterPro" id="IPR001579">
    <property type="entry name" value="Glyco_hydro_18_chit_AS"/>
</dbReference>
<dbReference type="InterPro" id="IPR017853">
    <property type="entry name" value="Glycoside_hydrolase_SF"/>
</dbReference>
<dbReference type="InterPro" id="IPR050314">
    <property type="entry name" value="Glycosyl_Hydrlase_18"/>
</dbReference>
<dbReference type="PANTHER" id="PTHR11177">
    <property type="entry name" value="CHITINASE"/>
    <property type="match status" value="1"/>
</dbReference>
<dbReference type="PANTHER" id="PTHR11177:SF396">
    <property type="entry name" value="NOD FACTOR HYDROLASE PROTEIN 1"/>
    <property type="match status" value="1"/>
</dbReference>
<dbReference type="Pfam" id="PF00704">
    <property type="entry name" value="Glyco_hydro_18"/>
    <property type="match status" value="1"/>
</dbReference>
<dbReference type="SMART" id="SM00636">
    <property type="entry name" value="Glyco_18"/>
    <property type="match status" value="1"/>
</dbReference>
<dbReference type="SUPFAM" id="SSF51445">
    <property type="entry name" value="(Trans)glycosidases"/>
    <property type="match status" value="1"/>
</dbReference>
<dbReference type="SUPFAM" id="SSF54556">
    <property type="entry name" value="Chitinase insertion domain"/>
    <property type="match status" value="1"/>
</dbReference>
<dbReference type="PROSITE" id="PS01095">
    <property type="entry name" value="GH18_1"/>
    <property type="match status" value="1"/>
</dbReference>
<dbReference type="PROSITE" id="PS51910">
    <property type="entry name" value="GH18_2"/>
    <property type="match status" value="1"/>
</dbReference>
<name>NFH1_MEDTR</name>
<evidence type="ECO:0000255" key="1"/>
<evidence type="ECO:0000255" key="2">
    <source>
        <dbReference type="PROSITE-ProRule" id="PRU00498"/>
    </source>
</evidence>
<evidence type="ECO:0000255" key="3">
    <source>
        <dbReference type="PROSITE-ProRule" id="PRU01258"/>
    </source>
</evidence>
<evidence type="ECO:0000269" key="4">
    <source>
    </source>
</evidence>
<evidence type="ECO:0000269" key="5">
    <source>
    </source>
</evidence>
<evidence type="ECO:0000269" key="6">
    <source>
    </source>
</evidence>
<evidence type="ECO:0000303" key="7">
    <source>
    </source>
</evidence>
<evidence type="ECO:0000303" key="8">
    <source>
    </source>
</evidence>
<evidence type="ECO:0000305" key="9"/>
<evidence type="ECO:0000312" key="10">
    <source>
        <dbReference type="EMBL" id="CAD56465.1"/>
    </source>
</evidence>
<evidence type="ECO:0000312" key="11">
    <source>
        <dbReference type="EMBL" id="KEH32176.1"/>
    </source>
</evidence>
<proteinExistence type="evidence at protein level"/>
<organism>
    <name type="scientific">Medicago truncatula</name>
    <name type="common">Barrel medic</name>
    <name type="synonym">Medicago tribuloides</name>
    <dbReference type="NCBI Taxonomy" id="3880"/>
    <lineage>
        <taxon>Eukaryota</taxon>
        <taxon>Viridiplantae</taxon>
        <taxon>Streptophyta</taxon>
        <taxon>Embryophyta</taxon>
        <taxon>Tracheophyta</taxon>
        <taxon>Spermatophyta</taxon>
        <taxon>Magnoliopsida</taxon>
        <taxon>eudicotyledons</taxon>
        <taxon>Gunneridae</taxon>
        <taxon>Pentapetalae</taxon>
        <taxon>rosids</taxon>
        <taxon>fabids</taxon>
        <taxon>Fabales</taxon>
        <taxon>Fabaceae</taxon>
        <taxon>Papilionoideae</taxon>
        <taxon>50 kb inversion clade</taxon>
        <taxon>NPAAA clade</taxon>
        <taxon>Hologalegina</taxon>
        <taxon>IRL clade</taxon>
        <taxon>Trifolieae</taxon>
        <taxon>Medicago</taxon>
    </lineage>
</organism>
<protein>
    <recommendedName>
        <fullName evidence="8">Nod factor hydrolase protein 1</fullName>
        <shortName evidence="8">MtNFH1</shortName>
    </recommendedName>
    <alternativeName>
        <fullName evidence="9">Class V chitinase NFH1</fullName>
    </alternativeName>
    <alternativeName>
        <fullName evidence="7">Mtchit5</fullName>
    </alternativeName>
</protein>